<protein>
    <recommendedName>
        <fullName>UPF0147 protein APE_2336a</fullName>
    </recommendedName>
</protein>
<sequence length="91" mass="10080">MAMNLPADNEGKIKLAMSILVTIINDTGVPRNIRRAAANALTHLRDPRLSPAVRAANAISALEEVSQDPNMPFYARTRIWQVITILETVRD</sequence>
<organism>
    <name type="scientific">Aeropyrum pernix (strain ATCC 700893 / DSM 11879 / JCM 9820 / NBRC 100138 / K1)</name>
    <dbReference type="NCBI Taxonomy" id="272557"/>
    <lineage>
        <taxon>Archaea</taxon>
        <taxon>Thermoproteota</taxon>
        <taxon>Thermoprotei</taxon>
        <taxon>Desulfurococcales</taxon>
        <taxon>Desulfurococcaceae</taxon>
        <taxon>Aeropyrum</taxon>
    </lineage>
</organism>
<feature type="chain" id="PRO_0000150905" description="UPF0147 protein APE_2336a">
    <location>
        <begin position="1"/>
        <end position="91"/>
    </location>
</feature>
<reference key="1">
    <citation type="journal article" date="1999" name="DNA Res.">
        <title>Complete genome sequence of an aerobic hyper-thermophilic crenarchaeon, Aeropyrum pernix K1.</title>
        <authorList>
            <person name="Kawarabayasi Y."/>
            <person name="Hino Y."/>
            <person name="Horikawa H."/>
            <person name="Yamazaki S."/>
            <person name="Haikawa Y."/>
            <person name="Jin-no K."/>
            <person name="Takahashi M."/>
            <person name="Sekine M."/>
            <person name="Baba S."/>
            <person name="Ankai A."/>
            <person name="Kosugi H."/>
            <person name="Hosoyama A."/>
            <person name="Fukui S."/>
            <person name="Nagai Y."/>
            <person name="Nishijima K."/>
            <person name="Nakazawa H."/>
            <person name="Takamiya M."/>
            <person name="Masuda S."/>
            <person name="Funahashi T."/>
            <person name="Tanaka T."/>
            <person name="Kudoh Y."/>
            <person name="Yamazaki J."/>
            <person name="Kushida N."/>
            <person name="Oguchi A."/>
            <person name="Aoki K."/>
            <person name="Kubota K."/>
            <person name="Nakamura Y."/>
            <person name="Nomura N."/>
            <person name="Sako Y."/>
            <person name="Kikuchi H."/>
        </authorList>
    </citation>
    <scope>NUCLEOTIDE SEQUENCE [LARGE SCALE GENOMIC DNA]</scope>
    <source>
        <strain>ATCC 700893 / DSM 11879 / JCM 9820 / NBRC 100138 / K1</strain>
    </source>
</reference>
<accession>Q9Y9F0</accession>
<gene>
    <name type="ordered locus">APE_2336a</name>
    <name type="ORF">APES069</name>
</gene>
<dbReference type="EMBL" id="BA000002">
    <property type="protein sequence ID" value="BAA81350.1"/>
    <property type="molecule type" value="Genomic_DNA"/>
</dbReference>
<dbReference type="PIR" id="F72461">
    <property type="entry name" value="F72461"/>
</dbReference>
<dbReference type="SMR" id="Q9Y9F0"/>
<dbReference type="STRING" id="272557.APE_2336a"/>
<dbReference type="EnsemblBacteria" id="BAA81350">
    <property type="protein sequence ID" value="BAA81350"/>
    <property type="gene ID" value="APE_2336a"/>
</dbReference>
<dbReference type="KEGG" id="ape:APE_2336a"/>
<dbReference type="PATRIC" id="fig|272557.25.peg.1561"/>
<dbReference type="eggNOG" id="arCOG04308">
    <property type="taxonomic scope" value="Archaea"/>
</dbReference>
<dbReference type="Proteomes" id="UP000002518">
    <property type="component" value="Chromosome"/>
</dbReference>
<dbReference type="Gene3D" id="1.20.1440.50">
    <property type="entry name" value="Ta0600-like"/>
    <property type="match status" value="1"/>
</dbReference>
<dbReference type="HAMAP" id="MF_00342">
    <property type="entry name" value="UPF0147"/>
    <property type="match status" value="1"/>
</dbReference>
<dbReference type="InterPro" id="IPR023130">
    <property type="entry name" value="Ta0600-like_sf"/>
</dbReference>
<dbReference type="InterPro" id="IPR005354">
    <property type="entry name" value="UPF0147"/>
</dbReference>
<dbReference type="NCBIfam" id="NF003319">
    <property type="entry name" value="PRK04330.1"/>
    <property type="match status" value="1"/>
</dbReference>
<dbReference type="Pfam" id="PF03685">
    <property type="entry name" value="UPF0147"/>
    <property type="match status" value="1"/>
</dbReference>
<dbReference type="SUPFAM" id="SSF158436">
    <property type="entry name" value="Ta0600-like"/>
    <property type="match status" value="1"/>
</dbReference>
<proteinExistence type="inferred from homology"/>
<comment type="similarity">
    <text evidence="1">Belongs to the UPF0147 family.</text>
</comment>
<evidence type="ECO:0000305" key="1"/>
<name>Y069_AERPE</name>
<keyword id="KW-1185">Reference proteome</keyword>